<gene>
    <name type="primary">nob1</name>
    <name type="ORF">SPAC1486.09</name>
</gene>
<name>NOB1_SCHPO</name>
<accession>Q9UTK0</accession>
<organism>
    <name type="scientific">Schizosaccharomyces pombe (strain 972 / ATCC 24843)</name>
    <name type="common">Fission yeast</name>
    <dbReference type="NCBI Taxonomy" id="284812"/>
    <lineage>
        <taxon>Eukaryota</taxon>
        <taxon>Fungi</taxon>
        <taxon>Dikarya</taxon>
        <taxon>Ascomycota</taxon>
        <taxon>Taphrinomycotina</taxon>
        <taxon>Schizosaccharomycetes</taxon>
        <taxon>Schizosaccharomycetales</taxon>
        <taxon>Schizosaccharomycetaceae</taxon>
        <taxon>Schizosaccharomyces</taxon>
    </lineage>
</organism>
<proteinExistence type="inferred from homology"/>
<comment type="function">
    <text evidence="1">Required for the synthesis of 40S ribosome subunits. Has a role in processing 20S pre-rRNA into the mature 18S rRNA, where it is required for cleavage at the 3' end of the mature 18S rRNA (D-site). Accompanies the 20S pre-rRNA from the nucleus to the cytoplasm (By similarity).</text>
</comment>
<comment type="subunit">
    <text evidence="1">Component of the small ribosomal subunit, ribosomal RNA processing complex (SSU RRP complex).</text>
</comment>
<comment type="subcellular location">
    <subcellularLocation>
        <location>Cytoplasm</location>
    </subcellularLocation>
    <subcellularLocation>
        <location>Nucleus</location>
        <location>Nucleolus</location>
    </subcellularLocation>
</comment>
<comment type="similarity">
    <text evidence="5">Belongs to the NOB1 family.</text>
</comment>
<keyword id="KW-0963">Cytoplasm</keyword>
<keyword id="KW-0255">Endonuclease</keyword>
<keyword id="KW-0378">Hydrolase</keyword>
<keyword id="KW-0479">Metal-binding</keyword>
<keyword id="KW-0540">Nuclease</keyword>
<keyword id="KW-0539">Nucleus</keyword>
<keyword id="KW-1185">Reference proteome</keyword>
<keyword id="KW-0690">Ribosome biogenesis</keyword>
<keyword id="KW-0862">Zinc</keyword>
<keyword id="KW-0863">Zinc-finger</keyword>
<dbReference type="EC" id="3.1.-.-"/>
<dbReference type="EMBL" id="CU329670">
    <property type="protein sequence ID" value="CAB62419.1"/>
    <property type="molecule type" value="Genomic_DNA"/>
</dbReference>
<dbReference type="PIR" id="T50078">
    <property type="entry name" value="T50078"/>
</dbReference>
<dbReference type="RefSeq" id="NP_594097.1">
    <property type="nucleotide sequence ID" value="NM_001019521.2"/>
</dbReference>
<dbReference type="SMR" id="Q9UTK0"/>
<dbReference type="BioGRID" id="277953">
    <property type="interactions" value="1"/>
</dbReference>
<dbReference type="FunCoup" id="Q9UTK0">
    <property type="interactions" value="438"/>
</dbReference>
<dbReference type="STRING" id="284812.Q9UTK0"/>
<dbReference type="iPTMnet" id="Q9UTK0"/>
<dbReference type="PaxDb" id="4896-SPAC1486.09.1"/>
<dbReference type="EnsemblFungi" id="SPAC1486.09.1">
    <property type="protein sequence ID" value="SPAC1486.09.1:pep"/>
    <property type="gene ID" value="SPAC1486.09"/>
</dbReference>
<dbReference type="GeneID" id="2541448"/>
<dbReference type="KEGG" id="spo:2541448"/>
<dbReference type="PomBase" id="SPAC1486.09">
    <property type="gene designation" value="nob1"/>
</dbReference>
<dbReference type="VEuPathDB" id="FungiDB:SPAC1486.09"/>
<dbReference type="eggNOG" id="KOG2463">
    <property type="taxonomic scope" value="Eukaryota"/>
</dbReference>
<dbReference type="HOGENOM" id="CLU_024666_2_0_1"/>
<dbReference type="InParanoid" id="Q9UTK0"/>
<dbReference type="OMA" id="DYAMQNT"/>
<dbReference type="PhylomeDB" id="Q9UTK0"/>
<dbReference type="PRO" id="PR:Q9UTK0"/>
<dbReference type="Proteomes" id="UP000002485">
    <property type="component" value="Chromosome I"/>
</dbReference>
<dbReference type="GO" id="GO:0005737">
    <property type="term" value="C:cytoplasm"/>
    <property type="evidence" value="ECO:0007669"/>
    <property type="project" value="UniProtKB-SubCell"/>
</dbReference>
<dbReference type="GO" id="GO:0005730">
    <property type="term" value="C:nucleolus"/>
    <property type="evidence" value="ECO:0007669"/>
    <property type="project" value="UniProtKB-SubCell"/>
</dbReference>
<dbReference type="GO" id="GO:0005634">
    <property type="term" value="C:nucleus"/>
    <property type="evidence" value="ECO:0007005"/>
    <property type="project" value="PomBase"/>
</dbReference>
<dbReference type="GO" id="GO:0030688">
    <property type="term" value="C:preribosome, small subunit precursor"/>
    <property type="evidence" value="ECO:0000318"/>
    <property type="project" value="GO_Central"/>
</dbReference>
<dbReference type="GO" id="GO:0003723">
    <property type="term" value="F:RNA binding"/>
    <property type="evidence" value="ECO:0000266"/>
    <property type="project" value="PomBase"/>
</dbReference>
<dbReference type="GO" id="GO:0004521">
    <property type="term" value="F:RNA endonuclease activity"/>
    <property type="evidence" value="ECO:0000318"/>
    <property type="project" value="GO_Central"/>
</dbReference>
<dbReference type="GO" id="GO:0008270">
    <property type="term" value="F:zinc ion binding"/>
    <property type="evidence" value="ECO:0007669"/>
    <property type="project" value="UniProtKB-KW"/>
</dbReference>
<dbReference type="GO" id="GO:0030490">
    <property type="term" value="P:maturation of SSU-rRNA"/>
    <property type="evidence" value="ECO:0000318"/>
    <property type="project" value="GO_Central"/>
</dbReference>
<dbReference type="CDD" id="cd09876">
    <property type="entry name" value="PIN_Nob1-like"/>
    <property type="match status" value="1"/>
</dbReference>
<dbReference type="FunFam" id="3.40.50.1010:FF:000020">
    <property type="entry name" value="20S-pre-rRNA D-site endonuclease NOB1"/>
    <property type="match status" value="1"/>
</dbReference>
<dbReference type="Gene3D" id="3.40.50.1010">
    <property type="entry name" value="5'-nuclease"/>
    <property type="match status" value="1"/>
</dbReference>
<dbReference type="Gene3D" id="6.20.210.10">
    <property type="entry name" value="Nin one binding (NOB1), Zn-ribbon-like"/>
    <property type="match status" value="1"/>
</dbReference>
<dbReference type="InterPro" id="IPR039907">
    <property type="entry name" value="NOB1"/>
</dbReference>
<dbReference type="InterPro" id="IPR017117">
    <property type="entry name" value="Nob1_euk"/>
</dbReference>
<dbReference type="InterPro" id="IPR036283">
    <property type="entry name" value="NOB1_Zf-like_sf"/>
</dbReference>
<dbReference type="InterPro" id="IPR014881">
    <property type="entry name" value="NOB1_Zn-bd"/>
</dbReference>
<dbReference type="InterPro" id="IPR002716">
    <property type="entry name" value="PIN_dom"/>
</dbReference>
<dbReference type="InterPro" id="IPR033411">
    <property type="entry name" value="Ribonuclease_PIN"/>
</dbReference>
<dbReference type="PANTHER" id="PTHR12814">
    <property type="entry name" value="RNA-BINDING PROTEIN NOB1"/>
    <property type="match status" value="1"/>
</dbReference>
<dbReference type="PANTHER" id="PTHR12814:SF2">
    <property type="entry name" value="RNA-BINDING PROTEIN NOB1"/>
    <property type="match status" value="1"/>
</dbReference>
<dbReference type="Pfam" id="PF17146">
    <property type="entry name" value="PIN_6"/>
    <property type="match status" value="1"/>
</dbReference>
<dbReference type="Pfam" id="PF08772">
    <property type="entry name" value="Zn_ribbon_NOB1"/>
    <property type="match status" value="1"/>
</dbReference>
<dbReference type="PIRSF" id="PIRSF037125">
    <property type="entry name" value="D-site_20S_pre-rRNA_nuclease"/>
    <property type="match status" value="1"/>
</dbReference>
<dbReference type="SMART" id="SM00670">
    <property type="entry name" value="PINc"/>
    <property type="match status" value="1"/>
</dbReference>
<dbReference type="SUPFAM" id="SSF144206">
    <property type="entry name" value="NOB1 zinc finger-like"/>
    <property type="match status" value="1"/>
</dbReference>
<evidence type="ECO:0000250" key="1"/>
<evidence type="ECO:0000250" key="2">
    <source>
        <dbReference type="UniProtKB" id="Q8BW10"/>
    </source>
</evidence>
<evidence type="ECO:0000255" key="3"/>
<evidence type="ECO:0000256" key="4">
    <source>
        <dbReference type="SAM" id="MobiDB-lite"/>
    </source>
</evidence>
<evidence type="ECO:0000305" key="5"/>
<reference key="1">
    <citation type="journal article" date="2002" name="Nature">
        <title>The genome sequence of Schizosaccharomyces pombe.</title>
        <authorList>
            <person name="Wood V."/>
            <person name="Gwilliam R."/>
            <person name="Rajandream M.A."/>
            <person name="Lyne M.H."/>
            <person name="Lyne R."/>
            <person name="Stewart A."/>
            <person name="Sgouros J.G."/>
            <person name="Peat N."/>
            <person name="Hayles J."/>
            <person name="Baker S.G."/>
            <person name="Basham D."/>
            <person name="Bowman S."/>
            <person name="Brooks K."/>
            <person name="Brown D."/>
            <person name="Brown S."/>
            <person name="Chillingworth T."/>
            <person name="Churcher C.M."/>
            <person name="Collins M."/>
            <person name="Connor R."/>
            <person name="Cronin A."/>
            <person name="Davis P."/>
            <person name="Feltwell T."/>
            <person name="Fraser A."/>
            <person name="Gentles S."/>
            <person name="Goble A."/>
            <person name="Hamlin N."/>
            <person name="Harris D.E."/>
            <person name="Hidalgo J."/>
            <person name="Hodgson G."/>
            <person name="Holroyd S."/>
            <person name="Hornsby T."/>
            <person name="Howarth S."/>
            <person name="Huckle E.J."/>
            <person name="Hunt S."/>
            <person name="Jagels K."/>
            <person name="James K.D."/>
            <person name="Jones L."/>
            <person name="Jones M."/>
            <person name="Leather S."/>
            <person name="McDonald S."/>
            <person name="McLean J."/>
            <person name="Mooney P."/>
            <person name="Moule S."/>
            <person name="Mungall K.L."/>
            <person name="Murphy L.D."/>
            <person name="Niblett D."/>
            <person name="Odell C."/>
            <person name="Oliver K."/>
            <person name="O'Neil S."/>
            <person name="Pearson D."/>
            <person name="Quail M.A."/>
            <person name="Rabbinowitsch E."/>
            <person name="Rutherford K.M."/>
            <person name="Rutter S."/>
            <person name="Saunders D."/>
            <person name="Seeger K."/>
            <person name="Sharp S."/>
            <person name="Skelton J."/>
            <person name="Simmonds M.N."/>
            <person name="Squares R."/>
            <person name="Squares S."/>
            <person name="Stevens K."/>
            <person name="Taylor K."/>
            <person name="Taylor R.G."/>
            <person name="Tivey A."/>
            <person name="Walsh S.V."/>
            <person name="Warren T."/>
            <person name="Whitehead S."/>
            <person name="Woodward J.R."/>
            <person name="Volckaert G."/>
            <person name="Aert R."/>
            <person name="Robben J."/>
            <person name="Grymonprez B."/>
            <person name="Weltjens I."/>
            <person name="Vanstreels E."/>
            <person name="Rieger M."/>
            <person name="Schaefer M."/>
            <person name="Mueller-Auer S."/>
            <person name="Gabel C."/>
            <person name="Fuchs M."/>
            <person name="Duesterhoeft A."/>
            <person name="Fritzc C."/>
            <person name="Holzer E."/>
            <person name="Moestl D."/>
            <person name="Hilbert H."/>
            <person name="Borzym K."/>
            <person name="Langer I."/>
            <person name="Beck A."/>
            <person name="Lehrach H."/>
            <person name="Reinhardt R."/>
            <person name="Pohl T.M."/>
            <person name="Eger P."/>
            <person name="Zimmermann W."/>
            <person name="Wedler H."/>
            <person name="Wambutt R."/>
            <person name="Purnelle B."/>
            <person name="Goffeau A."/>
            <person name="Cadieu E."/>
            <person name="Dreano S."/>
            <person name="Gloux S."/>
            <person name="Lelaure V."/>
            <person name="Mottier S."/>
            <person name="Galibert F."/>
            <person name="Aves S.J."/>
            <person name="Xiang Z."/>
            <person name="Hunt C."/>
            <person name="Moore K."/>
            <person name="Hurst S.M."/>
            <person name="Lucas M."/>
            <person name="Rochet M."/>
            <person name="Gaillardin C."/>
            <person name="Tallada V.A."/>
            <person name="Garzon A."/>
            <person name="Thode G."/>
            <person name="Daga R.R."/>
            <person name="Cruzado L."/>
            <person name="Jimenez J."/>
            <person name="Sanchez M."/>
            <person name="del Rey F."/>
            <person name="Benito J."/>
            <person name="Dominguez A."/>
            <person name="Revuelta J.L."/>
            <person name="Moreno S."/>
            <person name="Armstrong J."/>
            <person name="Forsburg S.L."/>
            <person name="Cerutti L."/>
            <person name="Lowe T."/>
            <person name="McCombie W.R."/>
            <person name="Paulsen I."/>
            <person name="Potashkin J."/>
            <person name="Shpakovski G.V."/>
            <person name="Ussery D."/>
            <person name="Barrell B.G."/>
            <person name="Nurse P."/>
        </authorList>
    </citation>
    <scope>NUCLEOTIDE SEQUENCE [LARGE SCALE GENOMIC DNA]</scope>
    <source>
        <strain>972 / ATCC 24843</strain>
    </source>
</reference>
<feature type="chain" id="PRO_0000374003" description="20S-pre-rRNA D-site endonuclease nob1">
    <location>
        <begin position="1"/>
        <end position="388"/>
    </location>
</feature>
<feature type="domain" description="PINc" evidence="3">
    <location>
        <begin position="6"/>
        <end position="108"/>
    </location>
</feature>
<feature type="zinc finger region" description="NOB1" evidence="3">
    <location>
        <begin position="246"/>
        <end position="317"/>
    </location>
</feature>
<feature type="region of interest" description="Disordered" evidence="4">
    <location>
        <begin position="110"/>
        <end position="206"/>
    </location>
</feature>
<feature type="region of interest" description="Disordered" evidence="4">
    <location>
        <begin position="311"/>
        <end position="333"/>
    </location>
</feature>
<feature type="compositionally biased region" description="Polar residues" evidence="4">
    <location>
        <begin position="119"/>
        <end position="138"/>
    </location>
</feature>
<feature type="compositionally biased region" description="Basic and acidic residues" evidence="4">
    <location>
        <begin position="139"/>
        <end position="152"/>
    </location>
</feature>
<feature type="compositionally biased region" description="Basic and acidic residues" evidence="4">
    <location>
        <begin position="165"/>
        <end position="176"/>
    </location>
</feature>
<feature type="compositionally biased region" description="Acidic residues" evidence="4">
    <location>
        <begin position="177"/>
        <end position="190"/>
    </location>
</feature>
<feature type="binding site" evidence="2">
    <location>
        <position position="256"/>
    </location>
    <ligand>
        <name>Zn(2+)</name>
        <dbReference type="ChEBI" id="CHEBI:29105"/>
    </ligand>
</feature>
<feature type="binding site" evidence="2">
    <location>
        <position position="259"/>
    </location>
    <ligand>
        <name>Zn(2+)</name>
        <dbReference type="ChEBI" id="CHEBI:29105"/>
    </ligand>
</feature>
<feature type="binding site" evidence="2">
    <location>
        <position position="271"/>
    </location>
    <ligand>
        <name>Zn(2+)</name>
        <dbReference type="ChEBI" id="CHEBI:29105"/>
    </ligand>
</feature>
<feature type="binding site" evidence="2">
    <location>
        <position position="274"/>
    </location>
    <ligand>
        <name>Zn(2+)</name>
        <dbReference type="ChEBI" id="CHEBI:29105"/>
    </ligand>
</feature>
<sequence>MSKSITHLVLDTGGIICSSTLLRNSAESFYTIPRVIAEIRDETSRKNFELWGDQVIQRVPKPEFIKKVSEFAKQTGDYSSLSVTDIQILALTYELEVEFNGGDWRLRKYPGQKHINGKPPSNSNSTEDASKPTSSDTASVKETENSDPKSAENEVLEGETTQHSNNKEAHPNTEENKEQEDNEEDDEDDGWITPSNIRKKKAEDGVGESLVQPKHLKVACATTDFSMQNVLLQIGLNLVSSDGFKIQNVKRFVLRCHGCYTVVKDMEKKFCPSCGGNTLIKTTCSINSKGEFQVHLKKNFEWKTRGTKYSLPKPVHGTSNGKGKKNPVLREDQPEYQRAVRRMQRKKEIDLMDEDYLPSLLTGVTKDRMYVQIGAGRKNPNEVRRKKR</sequence>
<protein>
    <recommendedName>
        <fullName>20S-pre-rRNA D-site endonuclease nob1</fullName>
        <ecNumber>3.1.-.-</ecNumber>
    </recommendedName>
    <alternativeName>
        <fullName>Pre-rRNA-processing endonuclease nob1</fullName>
    </alternativeName>
</protein>